<feature type="chain" id="PRO_0000377004" description="Uncharacterized oxidoreductase YvrD">
    <location>
        <begin position="1"/>
        <end position="263"/>
    </location>
</feature>
<feature type="active site" description="Proton acceptor" evidence="2">
    <location>
        <position position="154"/>
    </location>
</feature>
<feature type="binding site" evidence="1">
    <location>
        <begin position="13"/>
        <end position="20"/>
    </location>
    <ligand>
        <name>NADP(+)</name>
        <dbReference type="ChEBI" id="CHEBI:58349"/>
    </ligand>
</feature>
<feature type="binding site" evidence="1">
    <location>
        <position position="141"/>
    </location>
    <ligand>
        <name>substrate</name>
    </ligand>
</feature>
<dbReference type="EC" id="1.-.-.-"/>
<dbReference type="EMBL" id="AJ223978">
    <property type="protein sequence ID" value="CAA11734.1"/>
    <property type="molecule type" value="Genomic_DNA"/>
</dbReference>
<dbReference type="EMBL" id="AL009126">
    <property type="protein sequence ID" value="CAB15309.1"/>
    <property type="molecule type" value="Genomic_DNA"/>
</dbReference>
<dbReference type="PIR" id="H70046">
    <property type="entry name" value="H70046"/>
</dbReference>
<dbReference type="RefSeq" id="NP_391199.1">
    <property type="nucleotide sequence ID" value="NC_000964.3"/>
</dbReference>
<dbReference type="RefSeq" id="WP_003242985.1">
    <property type="nucleotide sequence ID" value="NZ_OZ025638.1"/>
</dbReference>
<dbReference type="SMR" id="O34782"/>
<dbReference type="FunCoup" id="O34782">
    <property type="interactions" value="14"/>
</dbReference>
<dbReference type="STRING" id="224308.BSU33190"/>
<dbReference type="jPOST" id="O34782"/>
<dbReference type="PaxDb" id="224308-BSU33190"/>
<dbReference type="EnsemblBacteria" id="CAB15309">
    <property type="protein sequence ID" value="CAB15309"/>
    <property type="gene ID" value="BSU_33190"/>
</dbReference>
<dbReference type="GeneID" id="938584"/>
<dbReference type="KEGG" id="bsu:BSU33190"/>
<dbReference type="PATRIC" id="fig|224308.179.peg.3600"/>
<dbReference type="eggNOG" id="COG1028">
    <property type="taxonomic scope" value="Bacteria"/>
</dbReference>
<dbReference type="InParanoid" id="O34782"/>
<dbReference type="OrthoDB" id="9804774at2"/>
<dbReference type="PhylomeDB" id="O34782"/>
<dbReference type="BioCyc" id="BSUB:BSU33190-MONOMER"/>
<dbReference type="Proteomes" id="UP000001570">
    <property type="component" value="Chromosome"/>
</dbReference>
<dbReference type="GO" id="GO:0016491">
    <property type="term" value="F:oxidoreductase activity"/>
    <property type="evidence" value="ECO:0007669"/>
    <property type="project" value="UniProtKB-KW"/>
</dbReference>
<dbReference type="GO" id="GO:0006629">
    <property type="term" value="P:lipid metabolic process"/>
    <property type="evidence" value="ECO:0007669"/>
    <property type="project" value="UniProtKB-ARBA"/>
</dbReference>
<dbReference type="GO" id="GO:0032787">
    <property type="term" value="P:monocarboxylic acid metabolic process"/>
    <property type="evidence" value="ECO:0007669"/>
    <property type="project" value="UniProtKB-ARBA"/>
</dbReference>
<dbReference type="CDD" id="cd05233">
    <property type="entry name" value="SDR_c"/>
    <property type="match status" value="1"/>
</dbReference>
<dbReference type="FunFam" id="3.40.50.720:FF:000084">
    <property type="entry name" value="Short-chain dehydrogenase reductase"/>
    <property type="match status" value="1"/>
</dbReference>
<dbReference type="Gene3D" id="3.40.50.720">
    <property type="entry name" value="NAD(P)-binding Rossmann-like Domain"/>
    <property type="match status" value="1"/>
</dbReference>
<dbReference type="InterPro" id="IPR036291">
    <property type="entry name" value="NAD(P)-bd_dom_sf"/>
</dbReference>
<dbReference type="InterPro" id="IPR020904">
    <property type="entry name" value="Sc_DH/Rdtase_CS"/>
</dbReference>
<dbReference type="InterPro" id="IPR050259">
    <property type="entry name" value="SDR"/>
</dbReference>
<dbReference type="InterPro" id="IPR002347">
    <property type="entry name" value="SDR_fam"/>
</dbReference>
<dbReference type="PANTHER" id="PTHR42879">
    <property type="entry name" value="3-OXOACYL-(ACYL-CARRIER-PROTEIN) REDUCTASE"/>
    <property type="match status" value="1"/>
</dbReference>
<dbReference type="Pfam" id="PF00106">
    <property type="entry name" value="adh_short"/>
    <property type="match status" value="1"/>
</dbReference>
<dbReference type="PRINTS" id="PR00081">
    <property type="entry name" value="GDHRDH"/>
</dbReference>
<dbReference type="PRINTS" id="PR00080">
    <property type="entry name" value="SDRFAMILY"/>
</dbReference>
<dbReference type="SUPFAM" id="SSF51735">
    <property type="entry name" value="NAD(P)-binding Rossmann-fold domains"/>
    <property type="match status" value="1"/>
</dbReference>
<dbReference type="PROSITE" id="PS00061">
    <property type="entry name" value="ADH_SHORT"/>
    <property type="match status" value="1"/>
</dbReference>
<organism>
    <name type="scientific">Bacillus subtilis (strain 168)</name>
    <dbReference type="NCBI Taxonomy" id="224308"/>
    <lineage>
        <taxon>Bacteria</taxon>
        <taxon>Bacillati</taxon>
        <taxon>Bacillota</taxon>
        <taxon>Bacilli</taxon>
        <taxon>Bacillales</taxon>
        <taxon>Bacillaceae</taxon>
        <taxon>Bacillus</taxon>
    </lineage>
</organism>
<protein>
    <recommendedName>
        <fullName>Uncharacterized oxidoreductase YvrD</fullName>
        <ecNumber>1.-.-.-</ecNumber>
    </recommendedName>
</protein>
<comment type="similarity">
    <text evidence="3">Belongs to the short-chain dehydrogenases/reductases (SDR) family.</text>
</comment>
<proteinExistence type="inferred from homology"/>
<name>YVRD_BACSU</name>
<sequence>MDLQLKEKLVLITGSTSGIGKAAAKSFLQEGAAVIVNGRKQETVDRTIEELSGYGTVHGAAADLSKTDEAAAFIEKVNEIGDIDILVNNLGFFEVKDFADVTDEEWNQYFEVNVMSAVRTSRHFLPKMLAKNSGRILNIASEAGVKPLPTMIPYSMTKTALISLSRGMAEMTKGTNVTVNSVLPGPTWTEGVASYMEGAAQAAGQDTDTFIKDYFKVNEPTSLIQRYATAEEVANTIVFLASDAASAINGTAQRVEGGIIRSL</sequence>
<gene>
    <name type="primary">yvrD</name>
    <name type="ordered locus">BSU33190</name>
</gene>
<accession>O34782</accession>
<accession>Q7B2K2</accession>
<reference key="1">
    <citation type="journal article" date="1998" name="Microbiology">
        <title>The yvsA-yvqA (293 degrees - 289 degrees) region of the Bacillus subtilis chromosome containing genes involved in metal ion uptake and a putative sigma factor.</title>
        <authorList>
            <person name="Wipat A."/>
            <person name="Brignell C.S."/>
            <person name="Guy J.B."/>
            <person name="Rose M."/>
            <person name="Emmerson P.T."/>
            <person name="Harwood C.R."/>
        </authorList>
    </citation>
    <scope>NUCLEOTIDE SEQUENCE [GENOMIC DNA]</scope>
    <source>
        <strain>168</strain>
    </source>
</reference>
<reference key="2">
    <citation type="journal article" date="1997" name="Nature">
        <title>The complete genome sequence of the Gram-positive bacterium Bacillus subtilis.</title>
        <authorList>
            <person name="Kunst F."/>
            <person name="Ogasawara N."/>
            <person name="Moszer I."/>
            <person name="Albertini A.M."/>
            <person name="Alloni G."/>
            <person name="Azevedo V."/>
            <person name="Bertero M.G."/>
            <person name="Bessieres P."/>
            <person name="Bolotin A."/>
            <person name="Borchert S."/>
            <person name="Borriss R."/>
            <person name="Boursier L."/>
            <person name="Brans A."/>
            <person name="Braun M."/>
            <person name="Brignell S.C."/>
            <person name="Bron S."/>
            <person name="Brouillet S."/>
            <person name="Bruschi C.V."/>
            <person name="Caldwell B."/>
            <person name="Capuano V."/>
            <person name="Carter N.M."/>
            <person name="Choi S.-K."/>
            <person name="Codani J.-J."/>
            <person name="Connerton I.F."/>
            <person name="Cummings N.J."/>
            <person name="Daniel R.A."/>
            <person name="Denizot F."/>
            <person name="Devine K.M."/>
            <person name="Duesterhoeft A."/>
            <person name="Ehrlich S.D."/>
            <person name="Emmerson P.T."/>
            <person name="Entian K.-D."/>
            <person name="Errington J."/>
            <person name="Fabret C."/>
            <person name="Ferrari E."/>
            <person name="Foulger D."/>
            <person name="Fritz C."/>
            <person name="Fujita M."/>
            <person name="Fujita Y."/>
            <person name="Fuma S."/>
            <person name="Galizzi A."/>
            <person name="Galleron N."/>
            <person name="Ghim S.-Y."/>
            <person name="Glaser P."/>
            <person name="Goffeau A."/>
            <person name="Golightly E.J."/>
            <person name="Grandi G."/>
            <person name="Guiseppi G."/>
            <person name="Guy B.J."/>
            <person name="Haga K."/>
            <person name="Haiech J."/>
            <person name="Harwood C.R."/>
            <person name="Henaut A."/>
            <person name="Hilbert H."/>
            <person name="Holsappel S."/>
            <person name="Hosono S."/>
            <person name="Hullo M.-F."/>
            <person name="Itaya M."/>
            <person name="Jones L.-M."/>
            <person name="Joris B."/>
            <person name="Karamata D."/>
            <person name="Kasahara Y."/>
            <person name="Klaerr-Blanchard M."/>
            <person name="Klein C."/>
            <person name="Kobayashi Y."/>
            <person name="Koetter P."/>
            <person name="Koningstein G."/>
            <person name="Krogh S."/>
            <person name="Kumano M."/>
            <person name="Kurita K."/>
            <person name="Lapidus A."/>
            <person name="Lardinois S."/>
            <person name="Lauber J."/>
            <person name="Lazarevic V."/>
            <person name="Lee S.-M."/>
            <person name="Levine A."/>
            <person name="Liu H."/>
            <person name="Masuda S."/>
            <person name="Mauel C."/>
            <person name="Medigue C."/>
            <person name="Medina N."/>
            <person name="Mellado R.P."/>
            <person name="Mizuno M."/>
            <person name="Moestl D."/>
            <person name="Nakai S."/>
            <person name="Noback M."/>
            <person name="Noone D."/>
            <person name="O'Reilly M."/>
            <person name="Ogawa K."/>
            <person name="Ogiwara A."/>
            <person name="Oudega B."/>
            <person name="Park S.-H."/>
            <person name="Parro V."/>
            <person name="Pohl T.M."/>
            <person name="Portetelle D."/>
            <person name="Porwollik S."/>
            <person name="Prescott A.M."/>
            <person name="Presecan E."/>
            <person name="Pujic P."/>
            <person name="Purnelle B."/>
            <person name="Rapoport G."/>
            <person name="Rey M."/>
            <person name="Reynolds S."/>
            <person name="Rieger M."/>
            <person name="Rivolta C."/>
            <person name="Rocha E."/>
            <person name="Roche B."/>
            <person name="Rose M."/>
            <person name="Sadaie Y."/>
            <person name="Sato T."/>
            <person name="Scanlan E."/>
            <person name="Schleich S."/>
            <person name="Schroeter R."/>
            <person name="Scoffone F."/>
            <person name="Sekiguchi J."/>
            <person name="Sekowska A."/>
            <person name="Seror S.J."/>
            <person name="Serror P."/>
            <person name="Shin B.-S."/>
            <person name="Soldo B."/>
            <person name="Sorokin A."/>
            <person name="Tacconi E."/>
            <person name="Takagi T."/>
            <person name="Takahashi H."/>
            <person name="Takemaru K."/>
            <person name="Takeuchi M."/>
            <person name="Tamakoshi A."/>
            <person name="Tanaka T."/>
            <person name="Terpstra P."/>
            <person name="Tognoni A."/>
            <person name="Tosato V."/>
            <person name="Uchiyama S."/>
            <person name="Vandenbol M."/>
            <person name="Vannier F."/>
            <person name="Vassarotti A."/>
            <person name="Viari A."/>
            <person name="Wambutt R."/>
            <person name="Wedler E."/>
            <person name="Wedler H."/>
            <person name="Weitzenegger T."/>
            <person name="Winters P."/>
            <person name="Wipat A."/>
            <person name="Yamamoto H."/>
            <person name="Yamane K."/>
            <person name="Yasumoto K."/>
            <person name="Yata K."/>
            <person name="Yoshida K."/>
            <person name="Yoshikawa H.-F."/>
            <person name="Zumstein E."/>
            <person name="Yoshikawa H."/>
            <person name="Danchin A."/>
        </authorList>
    </citation>
    <scope>NUCLEOTIDE SEQUENCE [LARGE SCALE GENOMIC DNA]</scope>
    <source>
        <strain>168</strain>
    </source>
</reference>
<keyword id="KW-0560">Oxidoreductase</keyword>
<keyword id="KW-1185">Reference proteome</keyword>
<evidence type="ECO:0000250" key="1"/>
<evidence type="ECO:0000255" key="2">
    <source>
        <dbReference type="PROSITE-ProRule" id="PRU10001"/>
    </source>
</evidence>
<evidence type="ECO:0000305" key="3"/>